<organism>
    <name type="scientific">Podospora anserina (strain S / ATCC MYA-4624 / DSM 980 / FGSC 10383)</name>
    <name type="common">Pleurage anserina</name>
    <dbReference type="NCBI Taxonomy" id="515849"/>
    <lineage>
        <taxon>Eukaryota</taxon>
        <taxon>Fungi</taxon>
        <taxon>Dikarya</taxon>
        <taxon>Ascomycota</taxon>
        <taxon>Pezizomycotina</taxon>
        <taxon>Sordariomycetes</taxon>
        <taxon>Sordariomycetidae</taxon>
        <taxon>Sordariales</taxon>
        <taxon>Podosporaceae</taxon>
        <taxon>Podospora</taxon>
        <taxon>Podospora anserina</taxon>
    </lineage>
</organism>
<name>SLX1_PODAN</name>
<sequence>MTPQPRPIPALYCVYILRSTVRHSSLYIGSTPNPPRRLSQHNGVVKGGAVRTSRNSLRPWEMVALVSGFASSTAALKFEWALTNPHTSLHIPSESRLAFSTQRKRNGQPKRPPKSLSSILSNLHLLLSVPSFARWPLRVHFFKRDVHAAWGRWCGKVERELRGSLPVVTDFGEDEGAVVARASASEPLGVVGEGLDGDGGGEEVPTWGIYGLPLDYAPLKEYVAKGQDIFEFERQGSCVVCKEEIDPEEGGLHAVCSNEGCEGVGHLRCWGRYLLKSEEGGGEGAILPVGGRCPRCKGEVHWGTMMKELTLRVRGQKEVENLLKVKRKRAPRKKTAKTKETREEDG</sequence>
<protein>
    <recommendedName>
        <fullName evidence="1">Structure-specific endonuclease subunit SLX1</fullName>
        <ecNumber evidence="1">3.1.-.-</ecNumber>
    </recommendedName>
</protein>
<keyword id="KW-0227">DNA damage</keyword>
<keyword id="KW-0233">DNA recombination</keyword>
<keyword id="KW-0234">DNA repair</keyword>
<keyword id="KW-0255">Endonuclease</keyword>
<keyword id="KW-0378">Hydrolase</keyword>
<keyword id="KW-0479">Metal-binding</keyword>
<keyword id="KW-0540">Nuclease</keyword>
<keyword id="KW-0539">Nucleus</keyword>
<keyword id="KW-1185">Reference proteome</keyword>
<keyword id="KW-0862">Zinc</keyword>
<keyword id="KW-0863">Zinc-finger</keyword>
<accession>B2B674</accession>
<accession>A0A090CJ97</accession>
<dbReference type="EC" id="3.1.-.-" evidence="1"/>
<dbReference type="EMBL" id="CU640366">
    <property type="protein sequence ID" value="CAP73299.1"/>
    <property type="molecule type" value="Genomic_DNA"/>
</dbReference>
<dbReference type="EMBL" id="FO904937">
    <property type="protein sequence ID" value="CDP25702.1"/>
    <property type="molecule type" value="Genomic_DNA"/>
</dbReference>
<dbReference type="RefSeq" id="XP_001911474.1">
    <property type="nucleotide sequence ID" value="XM_001911439.1"/>
</dbReference>
<dbReference type="SMR" id="B2B674"/>
<dbReference type="FunCoup" id="B2B674">
    <property type="interactions" value="377"/>
</dbReference>
<dbReference type="STRING" id="515849.B2B674"/>
<dbReference type="GeneID" id="6195598"/>
<dbReference type="KEGG" id="pan:PODANSg8516"/>
<dbReference type="VEuPathDB" id="FungiDB:PODANS_2_6950"/>
<dbReference type="eggNOG" id="KOG3005">
    <property type="taxonomic scope" value="Eukaryota"/>
</dbReference>
<dbReference type="HOGENOM" id="CLU_030739_1_1_1"/>
<dbReference type="InParanoid" id="B2B674"/>
<dbReference type="OrthoDB" id="24645at2759"/>
<dbReference type="Proteomes" id="UP000001197">
    <property type="component" value="Chromosome 2"/>
</dbReference>
<dbReference type="GO" id="GO:0033557">
    <property type="term" value="C:Slx1-Slx4 complex"/>
    <property type="evidence" value="ECO:0007669"/>
    <property type="project" value="UniProtKB-UniRule"/>
</dbReference>
<dbReference type="GO" id="GO:0017108">
    <property type="term" value="F:5'-flap endonuclease activity"/>
    <property type="evidence" value="ECO:0007669"/>
    <property type="project" value="InterPro"/>
</dbReference>
<dbReference type="GO" id="GO:0008821">
    <property type="term" value="F:crossover junction DNA endonuclease activity"/>
    <property type="evidence" value="ECO:0007669"/>
    <property type="project" value="TreeGrafter"/>
</dbReference>
<dbReference type="GO" id="GO:0008270">
    <property type="term" value="F:zinc ion binding"/>
    <property type="evidence" value="ECO:0007669"/>
    <property type="project" value="UniProtKB-KW"/>
</dbReference>
<dbReference type="GO" id="GO:0000724">
    <property type="term" value="P:double-strand break repair via homologous recombination"/>
    <property type="evidence" value="ECO:0007669"/>
    <property type="project" value="TreeGrafter"/>
</dbReference>
<dbReference type="CDD" id="cd10455">
    <property type="entry name" value="GIY-YIG_SLX1"/>
    <property type="match status" value="1"/>
</dbReference>
<dbReference type="Gene3D" id="3.40.1440.10">
    <property type="entry name" value="GIY-YIG endonuclease"/>
    <property type="match status" value="1"/>
</dbReference>
<dbReference type="Gene3D" id="3.30.40.10">
    <property type="entry name" value="Zinc/RING finger domain, C3HC4 (zinc finger)"/>
    <property type="match status" value="1"/>
</dbReference>
<dbReference type="HAMAP" id="MF_03100">
    <property type="entry name" value="Endonuc_su_Slx1"/>
    <property type="match status" value="1"/>
</dbReference>
<dbReference type="InterPro" id="IPR000305">
    <property type="entry name" value="GIY-YIG_endonuc"/>
</dbReference>
<dbReference type="InterPro" id="IPR035901">
    <property type="entry name" value="GIY-YIG_endonuc_sf"/>
</dbReference>
<dbReference type="InterPro" id="IPR027520">
    <property type="entry name" value="Slx1"/>
</dbReference>
<dbReference type="InterPro" id="IPR048749">
    <property type="entry name" value="SLX1_C"/>
</dbReference>
<dbReference type="InterPro" id="IPR050381">
    <property type="entry name" value="SLX1_endonuclease"/>
</dbReference>
<dbReference type="InterPro" id="IPR013083">
    <property type="entry name" value="Znf_RING/FYVE/PHD"/>
</dbReference>
<dbReference type="PANTHER" id="PTHR20208">
    <property type="entry name" value="STRUCTURE-SPECIFIC ENDONUCLEASE SUBUNIT SLX1"/>
    <property type="match status" value="1"/>
</dbReference>
<dbReference type="PANTHER" id="PTHR20208:SF10">
    <property type="entry name" value="STRUCTURE-SPECIFIC ENDONUCLEASE SUBUNIT SLX1"/>
    <property type="match status" value="1"/>
</dbReference>
<dbReference type="Pfam" id="PF01541">
    <property type="entry name" value="GIY-YIG"/>
    <property type="match status" value="1"/>
</dbReference>
<dbReference type="Pfam" id="PF21202">
    <property type="entry name" value="SLX1_C"/>
    <property type="match status" value="1"/>
</dbReference>
<dbReference type="PROSITE" id="PS50164">
    <property type="entry name" value="GIY_YIG"/>
    <property type="match status" value="1"/>
</dbReference>
<feature type="chain" id="PRO_0000383797" description="Structure-specific endonuclease subunit SLX1">
    <location>
        <begin position="1"/>
        <end position="346"/>
    </location>
</feature>
<feature type="domain" description="GIY-YIG" evidence="1">
    <location>
        <begin position="10"/>
        <end position="92"/>
    </location>
</feature>
<feature type="zinc finger region" description="SLX1-type" evidence="1">
    <location>
        <begin position="238"/>
        <end position="296"/>
    </location>
</feature>
<feature type="region of interest" description="Disordered" evidence="2">
    <location>
        <begin position="324"/>
        <end position="346"/>
    </location>
</feature>
<feature type="compositionally biased region" description="Basic residues" evidence="2">
    <location>
        <begin position="324"/>
        <end position="336"/>
    </location>
</feature>
<feature type="compositionally biased region" description="Basic and acidic residues" evidence="2">
    <location>
        <begin position="337"/>
        <end position="346"/>
    </location>
</feature>
<proteinExistence type="inferred from homology"/>
<comment type="function">
    <text evidence="1">Catalytic subunit of the SLX1-SLX4 structure-specific endonuclease that resolves DNA secondary structures generated during DNA repair and recombination. Has endonuclease activity towards branched DNA substrates, introducing single-strand cuts in duplex DNA close to junctions with ss-DNA.</text>
</comment>
<comment type="cofactor">
    <cofactor evidence="1">
        <name>a divalent metal cation</name>
        <dbReference type="ChEBI" id="CHEBI:60240"/>
    </cofactor>
</comment>
<comment type="subunit">
    <text evidence="1">Forms a heterodimer with SLX4.</text>
</comment>
<comment type="subcellular location">
    <subcellularLocation>
        <location evidence="1">Nucleus</location>
    </subcellularLocation>
</comment>
<comment type="similarity">
    <text evidence="1">Belongs to the SLX1 family.</text>
</comment>
<gene>
    <name evidence="1" type="primary">SLX1</name>
    <name type="ordered locus">Pa_2_6950</name>
    <name type="ORF">PODANS_2_6950</name>
</gene>
<reference key="1">
    <citation type="journal article" date="2008" name="Genome Biol.">
        <title>The genome sequence of the model ascomycete fungus Podospora anserina.</title>
        <authorList>
            <person name="Espagne E."/>
            <person name="Lespinet O."/>
            <person name="Malagnac F."/>
            <person name="Da Silva C."/>
            <person name="Jaillon O."/>
            <person name="Porcel B.M."/>
            <person name="Couloux A."/>
            <person name="Aury J.-M."/>
            <person name="Segurens B."/>
            <person name="Poulain J."/>
            <person name="Anthouard V."/>
            <person name="Grossetete S."/>
            <person name="Khalili H."/>
            <person name="Coppin E."/>
            <person name="Dequard-Chablat M."/>
            <person name="Picard M."/>
            <person name="Contamine V."/>
            <person name="Arnaise S."/>
            <person name="Bourdais A."/>
            <person name="Berteaux-Lecellier V."/>
            <person name="Gautheret D."/>
            <person name="de Vries R.P."/>
            <person name="Battaglia E."/>
            <person name="Coutinho P.M."/>
            <person name="Danchin E.G.J."/>
            <person name="Henrissat B."/>
            <person name="El Khoury R."/>
            <person name="Sainsard-Chanet A."/>
            <person name="Boivin A."/>
            <person name="Pinan-Lucarre B."/>
            <person name="Sellem C.H."/>
            <person name="Debuchy R."/>
            <person name="Wincker P."/>
            <person name="Weissenbach J."/>
            <person name="Silar P."/>
        </authorList>
    </citation>
    <scope>NUCLEOTIDE SEQUENCE [LARGE SCALE GENOMIC DNA]</scope>
    <source>
        <strain>S / ATCC MYA-4624 / DSM 980 / FGSC 10383</strain>
    </source>
</reference>
<reference key="2">
    <citation type="journal article" date="2014" name="Genetics">
        <title>Maintaining two mating types: Structure of the mating type locus and its role in heterokaryosis in Podospora anserina.</title>
        <authorList>
            <person name="Grognet P."/>
            <person name="Bidard F."/>
            <person name="Kuchly C."/>
            <person name="Tong L.C.H."/>
            <person name="Coppin E."/>
            <person name="Benkhali J.A."/>
            <person name="Couloux A."/>
            <person name="Wincker P."/>
            <person name="Debuchy R."/>
            <person name="Silar P."/>
        </authorList>
    </citation>
    <scope>GENOME REANNOTATION</scope>
    <source>
        <strain>S / ATCC MYA-4624 / DSM 980 / FGSC 10383</strain>
    </source>
</reference>
<evidence type="ECO:0000255" key="1">
    <source>
        <dbReference type="HAMAP-Rule" id="MF_03100"/>
    </source>
</evidence>
<evidence type="ECO:0000256" key="2">
    <source>
        <dbReference type="SAM" id="MobiDB-lite"/>
    </source>
</evidence>